<dbReference type="EMBL" id="AABR06064261">
    <property type="status" value="NOT_ANNOTATED_CDS"/>
    <property type="molecule type" value="Genomic_DNA"/>
</dbReference>
<dbReference type="EMBL" id="AABR06064262">
    <property type="status" value="NOT_ANNOTATED_CDS"/>
    <property type="molecule type" value="Genomic_DNA"/>
</dbReference>
<dbReference type="EMBL" id="AABR06064263">
    <property type="status" value="NOT_ANNOTATED_CDS"/>
    <property type="molecule type" value="Genomic_DNA"/>
</dbReference>
<dbReference type="EMBL" id="AABR06064264">
    <property type="status" value="NOT_ANNOTATED_CDS"/>
    <property type="molecule type" value="Genomic_DNA"/>
</dbReference>
<dbReference type="EMBL" id="AABR06064265">
    <property type="status" value="NOT_ANNOTATED_CDS"/>
    <property type="molecule type" value="Genomic_DNA"/>
</dbReference>
<dbReference type="RefSeq" id="NP_001406525.1">
    <molecule id="F1LQX4-1"/>
    <property type="nucleotide sequence ID" value="NM_001419596.1"/>
</dbReference>
<dbReference type="RefSeq" id="XP_006220759.1">
    <property type="nucleotide sequence ID" value="XM_006220697.3"/>
</dbReference>
<dbReference type="RefSeq" id="XP_006220760.1">
    <property type="nucleotide sequence ID" value="XM_006220698.3"/>
</dbReference>
<dbReference type="RefSeq" id="XP_006246896.1">
    <property type="nucleotide sequence ID" value="XM_006246834.3"/>
</dbReference>
<dbReference type="RefSeq" id="XP_006246897.1">
    <property type="nucleotide sequence ID" value="XM_006246835.3"/>
</dbReference>
<dbReference type="RefSeq" id="XP_008766117.1">
    <property type="nucleotide sequence ID" value="XM_008767895.2"/>
</dbReference>
<dbReference type="RefSeq" id="XP_008773220.1">
    <property type="nucleotide sequence ID" value="XM_008774998.2"/>
</dbReference>
<dbReference type="RefSeq" id="XP_063125087.1">
    <molecule id="F1LQX4-2"/>
    <property type="nucleotide sequence ID" value="XM_063269017.1"/>
</dbReference>
<dbReference type="RefSeq" id="XP_063125088.1">
    <molecule id="F1LQX4-3"/>
    <property type="nucleotide sequence ID" value="XM_063269018.1"/>
</dbReference>
<dbReference type="SMR" id="F1LQX4"/>
<dbReference type="BioGRID" id="257451">
    <property type="interactions" value="1"/>
</dbReference>
<dbReference type="FunCoup" id="F1LQX4">
    <property type="interactions" value="2524"/>
</dbReference>
<dbReference type="STRING" id="10116.ENSRNOP00000004829"/>
<dbReference type="GlyGen" id="F1LQX4">
    <property type="glycosylation" value="4 sites"/>
</dbReference>
<dbReference type="iPTMnet" id="F1LQX4"/>
<dbReference type="PhosphoSitePlus" id="F1LQX4"/>
<dbReference type="PaxDb" id="10116-ENSRNOP00000004829"/>
<dbReference type="Ensembl" id="ENSRNOT00000004829.9">
    <molecule id="F1LQX4-2"/>
    <property type="protein sequence ID" value="ENSRNOP00000004829.8"/>
    <property type="gene ID" value="ENSRNOG00000003603.9"/>
</dbReference>
<dbReference type="Ensembl" id="ENSRNOT00000101528.1">
    <molecule id="F1LQX4-1"/>
    <property type="protein sequence ID" value="ENSRNOP00000096546.1"/>
    <property type="gene ID" value="ENSRNOG00000003603.9"/>
</dbReference>
<dbReference type="GeneID" id="303222"/>
<dbReference type="AGR" id="RGD:1305664"/>
<dbReference type="RGD" id="1305664">
    <property type="gene designation" value="Arhgap44"/>
</dbReference>
<dbReference type="eggNOG" id="KOG4270">
    <property type="taxonomic scope" value="Eukaryota"/>
</dbReference>
<dbReference type="GeneTree" id="ENSGT00940000157296"/>
<dbReference type="HOGENOM" id="CLU_013806_0_0_1"/>
<dbReference type="InParanoid" id="F1LQX4"/>
<dbReference type="OMA" id="SDWIQAS"/>
<dbReference type="OrthoDB" id="19923at2759"/>
<dbReference type="TreeFam" id="TF316514"/>
<dbReference type="Reactome" id="R-RNO-8980692">
    <property type="pathway name" value="RHOA GTPase cycle"/>
</dbReference>
<dbReference type="Reactome" id="R-RNO-9013148">
    <property type="pathway name" value="CDC42 GTPase cycle"/>
</dbReference>
<dbReference type="Reactome" id="R-RNO-9013149">
    <property type="pathway name" value="RAC1 GTPase cycle"/>
</dbReference>
<dbReference type="PRO" id="PR:F1LQX4"/>
<dbReference type="Proteomes" id="UP000002494">
    <property type="component" value="Chromosome 10"/>
</dbReference>
<dbReference type="Bgee" id="ENSRNOG00000003603">
    <property type="expression patterns" value="Expressed in frontal cortex and 18 other cell types or tissues"/>
</dbReference>
<dbReference type="ExpressionAtlas" id="F1LQX4">
    <property type="expression patterns" value="baseline and differential"/>
</dbReference>
<dbReference type="GO" id="GO:0030425">
    <property type="term" value="C:dendrite"/>
    <property type="evidence" value="ECO:0000314"/>
    <property type="project" value="UniProtKB"/>
</dbReference>
<dbReference type="GO" id="GO:0043197">
    <property type="term" value="C:dendritic spine"/>
    <property type="evidence" value="ECO:0000266"/>
    <property type="project" value="RGD"/>
</dbReference>
<dbReference type="GO" id="GO:0098978">
    <property type="term" value="C:glutamatergic synapse"/>
    <property type="evidence" value="ECO:0000314"/>
    <property type="project" value="SynGO"/>
</dbReference>
<dbReference type="GO" id="GO:0031256">
    <property type="term" value="C:leading edge membrane"/>
    <property type="evidence" value="ECO:0000266"/>
    <property type="project" value="RGD"/>
</dbReference>
<dbReference type="GO" id="GO:0005886">
    <property type="term" value="C:plasma membrane"/>
    <property type="evidence" value="ECO:0000318"/>
    <property type="project" value="GO_Central"/>
</dbReference>
<dbReference type="GO" id="GO:0098794">
    <property type="term" value="C:postsynapse"/>
    <property type="evidence" value="ECO:0000314"/>
    <property type="project" value="RGD"/>
</dbReference>
<dbReference type="GO" id="GO:0014069">
    <property type="term" value="C:postsynaptic density"/>
    <property type="evidence" value="ECO:0000314"/>
    <property type="project" value="SynGO"/>
</dbReference>
<dbReference type="GO" id="GO:0098793">
    <property type="term" value="C:presynapse"/>
    <property type="evidence" value="ECO:0000314"/>
    <property type="project" value="RGD"/>
</dbReference>
<dbReference type="GO" id="GO:0048786">
    <property type="term" value="C:presynaptic active zone"/>
    <property type="evidence" value="ECO:0000314"/>
    <property type="project" value="SynGO"/>
</dbReference>
<dbReference type="GO" id="GO:0055037">
    <property type="term" value="C:recycling endosome"/>
    <property type="evidence" value="ECO:0007669"/>
    <property type="project" value="UniProtKB-SubCell"/>
</dbReference>
<dbReference type="GO" id="GO:0005096">
    <property type="term" value="F:GTPase activator activity"/>
    <property type="evidence" value="ECO:0000314"/>
    <property type="project" value="UniProtKB"/>
</dbReference>
<dbReference type="GO" id="GO:0005543">
    <property type="term" value="F:phospholipid binding"/>
    <property type="evidence" value="ECO:0000266"/>
    <property type="project" value="RGD"/>
</dbReference>
<dbReference type="GO" id="GO:0031267">
    <property type="term" value="F:small GTPase binding"/>
    <property type="evidence" value="ECO:0000266"/>
    <property type="project" value="RGD"/>
</dbReference>
<dbReference type="GO" id="GO:0006887">
    <property type="term" value="P:exocytosis"/>
    <property type="evidence" value="ECO:0007669"/>
    <property type="project" value="UniProtKB-KW"/>
</dbReference>
<dbReference type="GO" id="GO:0099010">
    <property type="term" value="P:modification of postsynaptic structure"/>
    <property type="evidence" value="ECO:0000266"/>
    <property type="project" value="RGD"/>
</dbReference>
<dbReference type="GO" id="GO:0050804">
    <property type="term" value="P:modulation of chemical synaptic transmission"/>
    <property type="evidence" value="ECO:0000266"/>
    <property type="project" value="RGD"/>
</dbReference>
<dbReference type="GO" id="GO:0051490">
    <property type="term" value="P:negative regulation of filopodium assembly"/>
    <property type="evidence" value="ECO:0000314"/>
    <property type="project" value="UniProtKB"/>
</dbReference>
<dbReference type="GO" id="GO:0035021">
    <property type="term" value="P:negative regulation of Rac protein signal transduction"/>
    <property type="evidence" value="ECO:0000266"/>
    <property type="project" value="RGD"/>
</dbReference>
<dbReference type="GO" id="GO:0032956">
    <property type="term" value="P:regulation of actin cytoskeleton organization"/>
    <property type="evidence" value="ECO:0000318"/>
    <property type="project" value="GO_Central"/>
</dbReference>
<dbReference type="GO" id="GO:0061001">
    <property type="term" value="P:regulation of dendritic spine morphogenesis"/>
    <property type="evidence" value="ECO:0000266"/>
    <property type="project" value="RGD"/>
</dbReference>
<dbReference type="GO" id="GO:0043087">
    <property type="term" value="P:regulation of GTPase activity"/>
    <property type="evidence" value="ECO:0000314"/>
    <property type="project" value="UniProtKB"/>
</dbReference>
<dbReference type="GO" id="GO:0099152">
    <property type="term" value="P:regulation of neurotransmitter receptor transport, endosome to postsynaptic membrane"/>
    <property type="evidence" value="ECO:0000266"/>
    <property type="project" value="RGD"/>
</dbReference>
<dbReference type="GO" id="GO:0007165">
    <property type="term" value="P:signal transduction"/>
    <property type="evidence" value="ECO:0007669"/>
    <property type="project" value="InterPro"/>
</dbReference>
<dbReference type="FunFam" id="1.10.555.10:FF:000001">
    <property type="entry name" value="Rho GTPase activating protein 44"/>
    <property type="match status" value="1"/>
</dbReference>
<dbReference type="FunFam" id="1.20.1270.60:FF:000018">
    <property type="entry name" value="Rho GTPase activating protein 44"/>
    <property type="match status" value="1"/>
</dbReference>
<dbReference type="Gene3D" id="1.20.1270.60">
    <property type="entry name" value="Arfaptin homology (AH) domain/BAR domain"/>
    <property type="match status" value="1"/>
</dbReference>
<dbReference type="Gene3D" id="1.10.555.10">
    <property type="entry name" value="Rho GTPase activation protein"/>
    <property type="match status" value="1"/>
</dbReference>
<dbReference type="InterPro" id="IPR027267">
    <property type="entry name" value="AH/BAR_dom_sf"/>
</dbReference>
<dbReference type="InterPro" id="IPR004148">
    <property type="entry name" value="BAR_dom"/>
</dbReference>
<dbReference type="InterPro" id="IPR047165">
    <property type="entry name" value="RHG17/44/SH3BP1-like"/>
</dbReference>
<dbReference type="InterPro" id="IPR008936">
    <property type="entry name" value="Rho_GTPase_activation_prot"/>
</dbReference>
<dbReference type="InterPro" id="IPR000198">
    <property type="entry name" value="RhoGAP_dom"/>
</dbReference>
<dbReference type="PANTHER" id="PTHR14130">
    <property type="entry name" value="3BP-1 RELATED RHOGAP"/>
    <property type="match status" value="1"/>
</dbReference>
<dbReference type="PANTHER" id="PTHR14130:SF13">
    <property type="entry name" value="RHO GTPASE-ACTIVATING PROTEIN 44"/>
    <property type="match status" value="1"/>
</dbReference>
<dbReference type="Pfam" id="PF03114">
    <property type="entry name" value="BAR"/>
    <property type="match status" value="1"/>
</dbReference>
<dbReference type="Pfam" id="PF00620">
    <property type="entry name" value="RhoGAP"/>
    <property type="match status" value="1"/>
</dbReference>
<dbReference type="SMART" id="SM00721">
    <property type="entry name" value="BAR"/>
    <property type="match status" value="1"/>
</dbReference>
<dbReference type="SMART" id="SM00324">
    <property type="entry name" value="RhoGAP"/>
    <property type="match status" value="1"/>
</dbReference>
<dbReference type="SUPFAM" id="SSF103657">
    <property type="entry name" value="BAR/IMD domain-like"/>
    <property type="match status" value="1"/>
</dbReference>
<dbReference type="SUPFAM" id="SSF48350">
    <property type="entry name" value="GTPase activation domain, GAP"/>
    <property type="match status" value="1"/>
</dbReference>
<dbReference type="PROSITE" id="PS51021">
    <property type="entry name" value="BAR"/>
    <property type="match status" value="1"/>
</dbReference>
<dbReference type="PROSITE" id="PS50238">
    <property type="entry name" value="RHOGAP"/>
    <property type="match status" value="1"/>
</dbReference>
<sequence>MKKQFNRMRQLANQTVGRAEKTEVLSEDLLQVEKRLELVKQVSHSTHKKLTACLQGQQGAEADKRSKKLPLTTLAQCLMEGSAILGDDTLLGKMLKLCGETEDELAQELIHFELRVERDVIEPLFLLAEVEIPNIQKQRKHLAKLVLDMDSSRTRWQQTSKSSGLSSSLQPAGAKADALREEMEEAANRVEICRDQLSADMYSFVAKEIDYANYFQTLIEVQAEYHRKSLTLLQAVLPQIKAQQEAWVEKPSFGKPLEEHLMISGREIAFPIEACVTMLLECGMQEEGLFRVAPSASKLKKLKAALDCCVVDVQEYSADPHAIAGALKSYLRELPEPLMTFELYDEWIQASNIQEQDKRLQALWNACEKLPKANHNNIRYLIKFLSKLSEYQDVNKMTPSNMAIVLGPNLLWPQSEGNITEMMTTVSLQIVGIIEPIIQHADWFFPGEIEFNITGSYGSPVHVNHNANYSSMPSPDMDPADRRQPEQARRPLSVATDNMMLEFYKKDGLRKIQSMGVRVMDTSWVARRGSSAGRKAACAPPSMQPPAPPSELAAPLPSPLPEQVPDSPATPAPALSPSGASLQPTPERPSVSKSKELSPGSGQKGSPGSIQGTTCPGTQLGPQPAASPSQLPADQSPHTLRKVSKKLAPIPPKVPFVQPGTVSDQPTGQPSPVSLSPTPPSTPSPYGLSYPPGYSMASGQLSPASAPPLASPSVFTSTLAKSRPTPKPRQRPTLPPPQPPSVSLSASSPQSTEHPMLDGMSPGESMSTDLVHFDVPSIHIELGSTLRLSPLEHARRHSVTDKRDSEEESESTAL</sequence>
<proteinExistence type="evidence at protein level"/>
<protein>
    <recommendedName>
        <fullName evidence="8">Rho GTPase-activating protein 44</fullName>
    </recommendedName>
    <alternativeName>
        <fullName>Rho-type GTPase-activating protein RICH2</fullName>
    </alternativeName>
    <alternativeName>
        <fullName>RhoGAP interacting with CIP4 homologs protein 2</fullName>
        <shortName>RICH-2</shortName>
    </alternativeName>
</protein>
<comment type="function">
    <text evidence="2 7">GTPase-activating protein (GAP) that stimulates the GTPase activity of Rho-type GTPases. Thereby, controls Rho-type GTPases cycling between their active GTP-bound and inactive GDP-bound states. Acts as a GAP at least for CDC42 and RAC1 (PubMed:25498153). In neurons, is involved in dendritic spine formation and synaptic plasticity in a specific RAC1-GAP activity (PubMed:25498153). Limits the initiation of exploratory dendritic filopodia. Recruited to actin-patches that seed filopodia, binds specifically to plasma membrane sections that are deformed inward by acto-myosin mediated contractile forces. Acts through GAP activity on RAC1 to reduce actin polymerization necessary for filopodia formation (PubMed:25498153). In association with SHANK3, promotes GRIA1 exocytosis from recycling endosomes and spine morphological changes associated to long-term potentiation (By similarity).</text>
</comment>
<comment type="subunit">
    <text evidence="1">Interacts with BST2 (via cytoplasmic domain). Interacts (probably via PDZ-binding motif) with SHANK3 (via PDZ domain); the interaction takes place in dendritic spines and promotes GRIA1 exocytosis (By similarity).</text>
</comment>
<comment type="subcellular location">
    <subcellularLocation>
        <location evidence="6 7">Cell projection</location>
        <location evidence="6 7">Dendritic spine</location>
    </subcellularLocation>
    <subcellularLocation>
        <location evidence="2">Recycling endosome</location>
    </subcellularLocation>
    <subcellularLocation>
        <location evidence="6">Presynapse</location>
    </subcellularLocation>
    <subcellularLocation>
        <location evidence="7">Cell projection</location>
        <location evidence="7">Dendrite</location>
    </subcellularLocation>
    <text evidence="2 7">In CA1 hippocampal synapses, detected at both presynaptic and postsynaptic sites (By similarity). Located in convoluted dendritic plasma membrane sections enriched in polymerized actin and myosin (patches) along dendrites where often emerge filopodia (PubMed:25498153).</text>
</comment>
<comment type="alternative products">
    <event type="alternative splicing"/>
    <isoform>
        <id>F1LQX4-1</id>
        <name>1</name>
        <sequence type="displayed"/>
    </isoform>
    <isoform>
        <id>F1LQX4-2</id>
        <name>2</name>
        <sequence type="described" ref="VSP_053619"/>
    </isoform>
    <isoform>
        <id>F1LQX4-3</id>
        <name>3</name>
        <sequence type="described" ref="VSP_053620 VSP_053621"/>
    </isoform>
</comment>
<comment type="tissue specificity">
    <text evidence="6 7">Expressed in brain, detected at high levels in hippocampal CA1 (at protein level).</text>
</comment>
<comment type="developmental stage">
    <text evidence="7">Expression increases in prefrontal cortex from 6 months to, at least, 39 months.</text>
</comment>
<comment type="domain">
    <text evidence="2 7">Rho-GAP domain is required to promote GRIA1 exocytosis from recycling endosomes. Rho-GAP and BAR domains are necessary for the control of long-term potentiation in hippocampal neurons (By similarity). In dendrites, BAR domain mediates the recruitment to patches where plasma membrane is deformed by acto-myosin mediated contractile forces (PubMed:25498153).</text>
</comment>
<comment type="miscellaneous">
    <molecule>Isoform 2</molecule>
    <text evidence="8">Contains a PDZ-binding motif at positions 767-770.</text>
</comment>
<keyword id="KW-0025">Alternative splicing</keyword>
<keyword id="KW-0966">Cell projection</keyword>
<keyword id="KW-0175">Coiled coil</keyword>
<keyword id="KW-0967">Endosome</keyword>
<keyword id="KW-0268">Exocytosis</keyword>
<keyword id="KW-0343">GTPase activation</keyword>
<keyword id="KW-0597">Phosphoprotein</keyword>
<keyword id="KW-1185">Reference proteome</keyword>
<keyword id="KW-0770">Synapse</keyword>
<accession>F1LQX4</accession>
<accession>F1LST2</accession>
<accession>M0RAT0</accession>
<name>RHG44_RAT</name>
<evidence type="ECO:0000250" key="1"/>
<evidence type="ECO:0000250" key="2">
    <source>
        <dbReference type="UniProtKB" id="Q5SSM3"/>
    </source>
</evidence>
<evidence type="ECO:0000255" key="3">
    <source>
        <dbReference type="PROSITE-ProRule" id="PRU00172"/>
    </source>
</evidence>
<evidence type="ECO:0000255" key="4">
    <source>
        <dbReference type="PROSITE-ProRule" id="PRU00361"/>
    </source>
</evidence>
<evidence type="ECO:0000256" key="5">
    <source>
        <dbReference type="SAM" id="MobiDB-lite"/>
    </source>
</evidence>
<evidence type="ECO:0000269" key="6">
    <source>
    </source>
</evidence>
<evidence type="ECO:0000269" key="7">
    <source>
    </source>
</evidence>
<evidence type="ECO:0000305" key="8"/>
<evidence type="ECO:0000312" key="9">
    <source>
        <dbReference type="RGD" id="1305664"/>
    </source>
</evidence>
<evidence type="ECO:0007744" key="10">
    <source>
    </source>
</evidence>
<organism>
    <name type="scientific">Rattus norvegicus</name>
    <name type="common">Rat</name>
    <dbReference type="NCBI Taxonomy" id="10116"/>
    <lineage>
        <taxon>Eukaryota</taxon>
        <taxon>Metazoa</taxon>
        <taxon>Chordata</taxon>
        <taxon>Craniata</taxon>
        <taxon>Vertebrata</taxon>
        <taxon>Euteleostomi</taxon>
        <taxon>Mammalia</taxon>
        <taxon>Eutheria</taxon>
        <taxon>Euarchontoglires</taxon>
        <taxon>Glires</taxon>
        <taxon>Rodentia</taxon>
        <taxon>Myomorpha</taxon>
        <taxon>Muroidea</taxon>
        <taxon>Muridae</taxon>
        <taxon>Murinae</taxon>
        <taxon>Rattus</taxon>
    </lineage>
</organism>
<reference key="1">
    <citation type="journal article" date="2004" name="Nature">
        <title>Genome sequence of the Brown Norway rat yields insights into mammalian evolution.</title>
        <authorList>
            <person name="Gibbs R.A."/>
            <person name="Weinstock G.M."/>
            <person name="Metzker M.L."/>
            <person name="Muzny D.M."/>
            <person name="Sodergren E.J."/>
            <person name="Scherer S."/>
            <person name="Scott G."/>
            <person name="Steffen D."/>
            <person name="Worley K.C."/>
            <person name="Burch P.E."/>
            <person name="Okwuonu G."/>
            <person name="Hines S."/>
            <person name="Lewis L."/>
            <person name="Deramo C."/>
            <person name="Delgado O."/>
            <person name="Dugan-Rocha S."/>
            <person name="Miner G."/>
            <person name="Morgan M."/>
            <person name="Hawes A."/>
            <person name="Gill R."/>
            <person name="Holt R.A."/>
            <person name="Adams M.D."/>
            <person name="Amanatides P.G."/>
            <person name="Baden-Tillson H."/>
            <person name="Barnstead M."/>
            <person name="Chin S."/>
            <person name="Evans C.A."/>
            <person name="Ferriera S."/>
            <person name="Fosler C."/>
            <person name="Glodek A."/>
            <person name="Gu Z."/>
            <person name="Jennings D."/>
            <person name="Kraft C.L."/>
            <person name="Nguyen T."/>
            <person name="Pfannkoch C.M."/>
            <person name="Sitter C."/>
            <person name="Sutton G.G."/>
            <person name="Venter J.C."/>
            <person name="Woodage T."/>
            <person name="Smith D."/>
            <person name="Lee H.-M."/>
            <person name="Gustafson E."/>
            <person name="Cahill P."/>
            <person name="Kana A."/>
            <person name="Doucette-Stamm L."/>
            <person name="Weinstock K."/>
            <person name="Fechtel K."/>
            <person name="Weiss R.B."/>
            <person name="Dunn D.M."/>
            <person name="Green E.D."/>
            <person name="Blakesley R.W."/>
            <person name="Bouffard G.G."/>
            <person name="De Jong P.J."/>
            <person name="Osoegawa K."/>
            <person name="Zhu B."/>
            <person name="Marra M."/>
            <person name="Schein J."/>
            <person name="Bosdet I."/>
            <person name="Fjell C."/>
            <person name="Jones S."/>
            <person name="Krzywinski M."/>
            <person name="Mathewson C."/>
            <person name="Siddiqui A."/>
            <person name="Wye N."/>
            <person name="McPherson J."/>
            <person name="Zhao S."/>
            <person name="Fraser C.M."/>
            <person name="Shetty J."/>
            <person name="Shatsman S."/>
            <person name="Geer K."/>
            <person name="Chen Y."/>
            <person name="Abramzon S."/>
            <person name="Nierman W.C."/>
            <person name="Havlak P.H."/>
            <person name="Chen R."/>
            <person name="Durbin K.J."/>
            <person name="Egan A."/>
            <person name="Ren Y."/>
            <person name="Song X.-Z."/>
            <person name="Li B."/>
            <person name="Liu Y."/>
            <person name="Qin X."/>
            <person name="Cawley S."/>
            <person name="Cooney A.J."/>
            <person name="D'Souza L.M."/>
            <person name="Martin K."/>
            <person name="Wu J.Q."/>
            <person name="Gonzalez-Garay M.L."/>
            <person name="Jackson A.R."/>
            <person name="Kalafus K.J."/>
            <person name="McLeod M.P."/>
            <person name="Milosavljevic A."/>
            <person name="Virk D."/>
            <person name="Volkov A."/>
            <person name="Wheeler D.A."/>
            <person name="Zhang Z."/>
            <person name="Bailey J.A."/>
            <person name="Eichler E.E."/>
            <person name="Tuzun E."/>
            <person name="Birney E."/>
            <person name="Mongin E."/>
            <person name="Ureta-Vidal A."/>
            <person name="Woodwark C."/>
            <person name="Zdobnov E."/>
            <person name="Bork P."/>
            <person name="Suyama M."/>
            <person name="Torrents D."/>
            <person name="Alexandersson M."/>
            <person name="Trask B.J."/>
            <person name="Young J.M."/>
            <person name="Huang H."/>
            <person name="Wang H."/>
            <person name="Xing H."/>
            <person name="Daniels S."/>
            <person name="Gietzen D."/>
            <person name="Schmidt J."/>
            <person name="Stevens K."/>
            <person name="Vitt U."/>
            <person name="Wingrove J."/>
            <person name="Camara F."/>
            <person name="Mar Alba M."/>
            <person name="Abril J.F."/>
            <person name="Guigo R."/>
            <person name="Smit A."/>
            <person name="Dubchak I."/>
            <person name="Rubin E.M."/>
            <person name="Couronne O."/>
            <person name="Poliakov A."/>
            <person name="Huebner N."/>
            <person name="Ganten D."/>
            <person name="Goesele C."/>
            <person name="Hummel O."/>
            <person name="Kreitler T."/>
            <person name="Lee Y.-A."/>
            <person name="Monti J."/>
            <person name="Schulz H."/>
            <person name="Zimdahl H."/>
            <person name="Himmelbauer H."/>
            <person name="Lehrach H."/>
            <person name="Jacob H.J."/>
            <person name="Bromberg S."/>
            <person name="Gullings-Handley J."/>
            <person name="Jensen-Seaman M.I."/>
            <person name="Kwitek A.E."/>
            <person name="Lazar J."/>
            <person name="Pasko D."/>
            <person name="Tonellato P.J."/>
            <person name="Twigger S."/>
            <person name="Ponting C.P."/>
            <person name="Duarte J.M."/>
            <person name="Rice S."/>
            <person name="Goodstadt L."/>
            <person name="Beatson S.A."/>
            <person name="Emes R.D."/>
            <person name="Winter E.E."/>
            <person name="Webber C."/>
            <person name="Brandt P."/>
            <person name="Nyakatura G."/>
            <person name="Adetobi M."/>
            <person name="Chiaromonte F."/>
            <person name="Elnitski L."/>
            <person name="Eswara P."/>
            <person name="Hardison R.C."/>
            <person name="Hou M."/>
            <person name="Kolbe D."/>
            <person name="Makova K."/>
            <person name="Miller W."/>
            <person name="Nekrutenko A."/>
            <person name="Riemer C."/>
            <person name="Schwartz S."/>
            <person name="Taylor J."/>
            <person name="Yang S."/>
            <person name="Zhang Y."/>
            <person name="Lindpaintner K."/>
            <person name="Andrews T.D."/>
            <person name="Caccamo M."/>
            <person name="Clamp M."/>
            <person name="Clarke L."/>
            <person name="Curwen V."/>
            <person name="Durbin R.M."/>
            <person name="Eyras E."/>
            <person name="Searle S.M."/>
            <person name="Cooper G.M."/>
            <person name="Batzoglou S."/>
            <person name="Brudno M."/>
            <person name="Sidow A."/>
            <person name="Stone E.A."/>
            <person name="Payseur B.A."/>
            <person name="Bourque G."/>
            <person name="Lopez-Otin C."/>
            <person name="Puente X.S."/>
            <person name="Chakrabarti K."/>
            <person name="Chatterji S."/>
            <person name="Dewey C."/>
            <person name="Pachter L."/>
            <person name="Bray N."/>
            <person name="Yap V.B."/>
            <person name="Caspi A."/>
            <person name="Tesler G."/>
            <person name="Pevzner P.A."/>
            <person name="Haussler D."/>
            <person name="Roskin K.M."/>
            <person name="Baertsch R."/>
            <person name="Clawson H."/>
            <person name="Furey T.S."/>
            <person name="Hinrichs A.S."/>
            <person name="Karolchik D."/>
            <person name="Kent W.J."/>
            <person name="Rosenbloom K.R."/>
            <person name="Trumbower H."/>
            <person name="Weirauch M."/>
            <person name="Cooper D.N."/>
            <person name="Stenson P.D."/>
            <person name="Ma B."/>
            <person name="Brent M."/>
            <person name="Arumugam M."/>
            <person name="Shteynberg D."/>
            <person name="Copley R.R."/>
            <person name="Taylor M.S."/>
            <person name="Riethman H."/>
            <person name="Mudunuri U."/>
            <person name="Peterson J."/>
            <person name="Guyer M."/>
            <person name="Felsenfeld A."/>
            <person name="Old S."/>
            <person name="Mockrin S."/>
            <person name="Collins F.S."/>
        </authorList>
    </citation>
    <scope>NUCLEOTIDE SEQUENCE [LARGE SCALE GENOMIC DNA]</scope>
    <source>
        <strain>Brown Norway</strain>
    </source>
</reference>
<reference key="2">
    <citation type="journal article" date="2012" name="Nat. Commun.">
        <title>Quantitative maps of protein phosphorylation sites across 14 different rat organs and tissues.</title>
        <authorList>
            <person name="Lundby A."/>
            <person name="Secher A."/>
            <person name="Lage K."/>
            <person name="Nordsborg N.B."/>
            <person name="Dmytriyev A."/>
            <person name="Lundby C."/>
            <person name="Olsen J.V."/>
        </authorList>
    </citation>
    <scope>PHOSPHORYLATION [LARGE SCALE ANALYSIS] AT SER-805</scope>
    <scope>IDENTIFICATION BY MASS SPECTROMETRY [LARGE SCALE ANALYSIS]</scope>
</reference>
<reference key="3">
    <citation type="journal article" date="2013" name="J. Neurosci.">
        <title>Shank3-Rich2 interaction regulates AMPA receptor recycling and synaptic long-term potentiation.</title>
        <authorList>
            <person name="Raynaud F."/>
            <person name="Janossy A."/>
            <person name="Dahl J."/>
            <person name="Bertaso F."/>
            <person name="Perroy J."/>
            <person name="Varrault A."/>
            <person name="Vidal M."/>
            <person name="Worley P.F."/>
            <person name="Boeckers T.M."/>
            <person name="Bockaert J."/>
            <person name="Marin P."/>
            <person name="Fagni L."/>
            <person name="Homburger V."/>
        </authorList>
    </citation>
    <scope>TISSUE SPECIFICITY</scope>
    <scope>SUBCELLULAR LOCATION</scope>
</reference>
<reference key="4">
    <citation type="journal article" date="2014" name="Elife">
        <title>Dynamic recruitment of the curvature-sensitive protein ArhGAP44 to nanoscale membrane deformations limits exploratory filopodia initiation in neurons.</title>
        <authorList>
            <person name="Galic M."/>
            <person name="Tsai F.C."/>
            <person name="Collins S.R."/>
            <person name="Matis M."/>
            <person name="Bandara S."/>
            <person name="Meyer T."/>
        </authorList>
    </citation>
    <scope>FUNCTION</scope>
    <scope>SUBCELLULAR LOCATION</scope>
    <scope>TISSUE SPECIFICITY</scope>
    <scope>DOMAIN</scope>
    <scope>MUTAGENESIS OF ARG-291</scope>
</reference>
<feature type="chain" id="PRO_0000425252" description="Rho GTPase-activating protein 44">
    <location>
        <begin position="1"/>
        <end position="814"/>
    </location>
</feature>
<feature type="domain" description="BAR" evidence="4">
    <location>
        <begin position="14"/>
        <end position="249"/>
    </location>
</feature>
<feature type="domain" description="Rho-GAP" evidence="3">
    <location>
        <begin position="255"/>
        <end position="445"/>
    </location>
</feature>
<feature type="region of interest" description="Disordered" evidence="5">
    <location>
        <begin position="467"/>
        <end position="493"/>
    </location>
</feature>
<feature type="region of interest" description="Disordered" evidence="5">
    <location>
        <begin position="531"/>
        <end position="768"/>
    </location>
</feature>
<feature type="region of interest" description="Interaction with BST2" evidence="1">
    <location>
        <begin position="727"/>
        <end position="814"/>
    </location>
</feature>
<feature type="region of interest" description="Disordered" evidence="5">
    <location>
        <begin position="784"/>
        <end position="814"/>
    </location>
</feature>
<feature type="short sequence motif" description="PDZ-binding" evidence="8">
    <location>
        <begin position="811"/>
        <end position="814"/>
    </location>
</feature>
<feature type="compositionally biased region" description="Basic and acidic residues" evidence="5">
    <location>
        <begin position="479"/>
        <end position="489"/>
    </location>
</feature>
<feature type="compositionally biased region" description="Low complexity" evidence="5">
    <location>
        <begin position="531"/>
        <end position="541"/>
    </location>
</feature>
<feature type="compositionally biased region" description="Low complexity" evidence="5">
    <location>
        <begin position="567"/>
        <end position="581"/>
    </location>
</feature>
<feature type="compositionally biased region" description="Low complexity" evidence="5">
    <location>
        <begin position="598"/>
        <end position="612"/>
    </location>
</feature>
<feature type="compositionally biased region" description="Low complexity" evidence="5">
    <location>
        <begin position="622"/>
        <end position="637"/>
    </location>
</feature>
<feature type="compositionally biased region" description="Low complexity" evidence="5">
    <location>
        <begin position="684"/>
        <end position="704"/>
    </location>
</feature>
<feature type="compositionally biased region" description="Low complexity" evidence="5">
    <location>
        <begin position="741"/>
        <end position="752"/>
    </location>
</feature>
<feature type="compositionally biased region" description="Basic and acidic residues" evidence="5">
    <location>
        <begin position="790"/>
        <end position="805"/>
    </location>
</feature>
<feature type="site" description="Arginine finger; crucial for GTP hydrolysis by stabilizing the transition state" evidence="3">
    <location>
        <position position="291"/>
    </location>
</feature>
<feature type="modified residue" description="Phosphoserine" evidence="2">
    <location>
        <position position="493"/>
    </location>
</feature>
<feature type="modified residue" description="Phosphoserine" evidence="10">
    <location>
        <position position="805"/>
    </location>
</feature>
<feature type="splice variant" id="VSP_053619" description="In isoform 2." evidence="8">
    <location>
        <begin position="509"/>
        <end position="514"/>
    </location>
</feature>
<feature type="splice variant" id="VSP_053620" description="In isoform 3." evidence="8">
    <original>DL</original>
    <variation>AV</variation>
    <location>
        <begin position="769"/>
        <end position="770"/>
    </location>
</feature>
<feature type="splice variant" id="VSP_053621" description="In isoform 3." evidence="8">
    <location>
        <begin position="771"/>
        <end position="814"/>
    </location>
</feature>
<feature type="mutagenesis site" description="Reduces GAP activity. Decreases inhibition of filopodia formation." evidence="7">
    <original>R</original>
    <variation>M</variation>
    <location>
        <position position="291"/>
    </location>
</feature>
<gene>
    <name evidence="9" type="primary">Arhgap44</name>
    <name type="synonym">Rich2</name>
</gene>